<gene>
    <name type="primary">invs</name>
</gene>
<accession>Q8UVC1</accession>
<reference key="1">
    <citation type="journal article" date="2002" name="Hum. Genet.">
        <title>The left-right determinant inversin has highly conserved ankyrin repeat and IQ domains and interacts with calmodulin.</title>
        <authorList>
            <person name="Morgan D."/>
            <person name="Goodship J."/>
            <person name="Essner J.J."/>
            <person name="Vogan K.J."/>
            <person name="Turnpenny L."/>
            <person name="Yost H.J."/>
            <person name="Tabin C.J."/>
            <person name="Strachan T."/>
        </authorList>
    </citation>
    <scope>NUCLEOTIDE SEQUENCE [MRNA]</scope>
</reference>
<reference key="2">
    <citation type="journal article" date="2003" name="Nat. Genet.">
        <title>Mutations in INVS encoding inversin cause nephronophthisis type 2, linking renal cystic disease to the function of primary cilia and left-right axis determination.</title>
        <authorList>
            <person name="Otto E.A."/>
            <person name="Schermer B."/>
            <person name="Obara T."/>
            <person name="O'Toole J.F."/>
            <person name="Hiller K.S."/>
            <person name="Mueller A.M."/>
            <person name="Ruf R.G."/>
            <person name="Hoefele J."/>
            <person name="Beekmann F."/>
            <person name="Landau D."/>
            <person name="Foreman J.W."/>
            <person name="Goodship J.A."/>
            <person name="Strachan T."/>
            <person name="Kispert A."/>
            <person name="Wolf M.T."/>
            <person name="Gagnadoux M.F."/>
            <person name="Nivet H."/>
            <person name="Antignac C."/>
            <person name="Walz G."/>
            <person name="Drummond I.A."/>
            <person name="Benzing T."/>
            <person name="Hildebrandt F."/>
        </authorList>
    </citation>
    <scope>FUNCTION</scope>
</reference>
<reference key="3">
    <citation type="journal article" date="2005" name="Nat. Genet.">
        <title>Inversin, the gene product mutated in nephronophthisis type II, functions as a molecular switch between Wnt signaling pathways.</title>
        <authorList>
            <person name="Simons M."/>
            <person name="Gloy J."/>
            <person name="Ganner A."/>
            <person name="Bullerkotte A."/>
            <person name="Bashkurov M."/>
            <person name="Kroenig C."/>
            <person name="Schermer B."/>
            <person name="Benzing T."/>
            <person name="Cabello O.A."/>
            <person name="Jenny A."/>
            <person name="Mlodzik M."/>
            <person name="Polok B."/>
            <person name="Driever W."/>
            <person name="Obara T."/>
            <person name="Walz G."/>
        </authorList>
    </citation>
    <scope>FUNCTION</scope>
</reference>
<keyword id="KW-0040">ANK repeat</keyword>
<keyword id="KW-0112">Calmodulin-binding</keyword>
<keyword id="KW-0963">Cytoplasm</keyword>
<keyword id="KW-0206">Cytoskeleton</keyword>
<keyword id="KW-0217">Developmental protein</keyword>
<keyword id="KW-1185">Reference proteome</keyword>
<keyword id="KW-0677">Repeat</keyword>
<keyword id="KW-0879">Wnt signaling pathway</keyword>
<organism>
    <name type="scientific">Danio rerio</name>
    <name type="common">Zebrafish</name>
    <name type="synonym">Brachydanio rerio</name>
    <dbReference type="NCBI Taxonomy" id="7955"/>
    <lineage>
        <taxon>Eukaryota</taxon>
        <taxon>Metazoa</taxon>
        <taxon>Chordata</taxon>
        <taxon>Craniata</taxon>
        <taxon>Vertebrata</taxon>
        <taxon>Euteleostomi</taxon>
        <taxon>Actinopterygii</taxon>
        <taxon>Neopterygii</taxon>
        <taxon>Teleostei</taxon>
        <taxon>Ostariophysi</taxon>
        <taxon>Cypriniformes</taxon>
        <taxon>Danionidae</taxon>
        <taxon>Danioninae</taxon>
        <taxon>Danio</taxon>
    </lineage>
</organism>
<name>INVS_DANRE</name>
<feature type="chain" id="PRO_0000067019" description="Inversin">
    <location>
        <begin position="1"/>
        <end position="1021"/>
    </location>
</feature>
<feature type="repeat" description="ANK 1">
    <location>
        <begin position="7"/>
        <end position="36"/>
    </location>
</feature>
<feature type="repeat" description="ANK 2">
    <location>
        <begin position="40"/>
        <end position="69"/>
    </location>
</feature>
<feature type="repeat" description="ANK 3">
    <location>
        <begin position="73"/>
        <end position="102"/>
    </location>
</feature>
<feature type="repeat" description="ANK 4">
    <location>
        <begin position="106"/>
        <end position="137"/>
    </location>
</feature>
<feature type="repeat" description="ANK 5">
    <location>
        <begin position="141"/>
        <end position="170"/>
    </location>
</feature>
<feature type="repeat" description="ANK 6">
    <location>
        <begin position="174"/>
        <end position="206"/>
    </location>
</feature>
<feature type="repeat" description="ANK 7">
    <location>
        <begin position="213"/>
        <end position="243"/>
    </location>
</feature>
<feature type="repeat" description="ANK 8">
    <location>
        <begin position="247"/>
        <end position="276"/>
    </location>
</feature>
<feature type="repeat" description="ANK 9">
    <location>
        <begin position="281"/>
        <end position="310"/>
    </location>
</feature>
<feature type="repeat" description="ANK 10">
    <location>
        <begin position="314"/>
        <end position="343"/>
    </location>
</feature>
<feature type="repeat" description="ANK 11">
    <location>
        <begin position="349"/>
        <end position="378"/>
    </location>
</feature>
<feature type="repeat" description="ANK 12">
    <location>
        <begin position="382"/>
        <end position="411"/>
    </location>
</feature>
<feature type="repeat" description="ANK 13">
    <location>
        <begin position="415"/>
        <end position="444"/>
    </location>
</feature>
<feature type="repeat" description="ANK 14">
    <location>
        <begin position="448"/>
        <end position="477"/>
    </location>
</feature>
<feature type="repeat" description="ANK 15">
    <location>
        <begin position="481"/>
        <end position="510"/>
    </location>
</feature>
<feature type="repeat" description="ANK 16">
    <location>
        <begin position="516"/>
        <end position="546"/>
    </location>
</feature>
<feature type="domain" description="IQ 1" evidence="2">
    <location>
        <begin position="548"/>
        <end position="577"/>
    </location>
</feature>
<feature type="domain" description="IQ 2" evidence="2">
    <location>
        <begin position="869"/>
        <end position="898"/>
    </location>
</feature>
<feature type="region of interest" description="Disordered" evidence="3">
    <location>
        <begin position="579"/>
        <end position="602"/>
    </location>
</feature>
<feature type="region of interest" description="Disordered" evidence="3">
    <location>
        <begin position="632"/>
        <end position="691"/>
    </location>
</feature>
<feature type="region of interest" description="Disordered" evidence="3">
    <location>
        <begin position="704"/>
        <end position="868"/>
    </location>
</feature>
<feature type="short sequence motif" description="D-box 1">
    <location>
        <begin position="483"/>
        <end position="491"/>
    </location>
</feature>
<feature type="short sequence motif" description="D-box 2">
    <location>
        <begin position="862"/>
        <end position="870"/>
    </location>
</feature>
<feature type="compositionally biased region" description="Basic and acidic residues" evidence="3">
    <location>
        <begin position="579"/>
        <end position="598"/>
    </location>
</feature>
<feature type="compositionally biased region" description="Basic and acidic residues" evidence="3">
    <location>
        <begin position="653"/>
        <end position="669"/>
    </location>
</feature>
<feature type="compositionally biased region" description="Low complexity" evidence="3">
    <location>
        <begin position="722"/>
        <end position="731"/>
    </location>
</feature>
<feature type="compositionally biased region" description="Polar residues" evidence="3">
    <location>
        <begin position="759"/>
        <end position="781"/>
    </location>
</feature>
<feature type="compositionally biased region" description="Polar residues" evidence="3">
    <location>
        <begin position="791"/>
        <end position="802"/>
    </location>
</feature>
<feature type="compositionally biased region" description="Basic and acidic residues" evidence="3">
    <location>
        <begin position="803"/>
        <end position="866"/>
    </location>
</feature>
<sequence>MAMLLPQNPSQVHAAAVNGDKNTLHKLITESALRDSEDQFGRTPLMYCVLADRLDCAEVLLKAGAGINKTDHSQRTALHLAAQKGNVRFMKLLLSRHADWRLKDLEEMTPLHLASRHSSSKPLSLLLKHMAPGEVDTQDRNKQTALHWSAFYNHPEHVKLLIKHDSNIGIPDSEGKIPLHWAAHNKHPNATRTVRCILEAAPTESLLNWQDYEGRTPLHFAVADGNEAVVEVLTSYEGCSVTAYDNLFRTPLHWAALLGHAKIVHLLLERNKSGMIPSDSQGATPLHYGAQSNFADTVAVFLKHHSVRDEPDLEGRTAFMWAAGKGSNDVIKIMLDLKKDIDINMTDKYGGTALHAAALSGHVSTVRLLLEQGGMVDPLDVMKHTPLFRACEMGHRDVILTLIKGGARVDLVDIDGHSALHWAALGGNAEVCEVLMENGISPNLQDQAGRTPLQCAAYAGYINCMALLIQHDADPNIQDKEGRTALHWSCNNGYLDAVKLLLGCGAFPNHMEHTEERYTPLDYALLGEHQELTQFLLEHGALSIAAIQDIAASSIQALYKGYKVRRAFRERKKLLMRHEQLRKDAAKKREEERRREAEQQLSFAEAGQKQRVLLAAVGVEKLSLDEAEQRVKDSVAAKGHKHKKSSSAHNSQSRREKPSRAERRTREPETSDAPSIRSLPPVTPMSTKKCPVTREEVCVRETFGPDTGISLNCGSANERRSPAGSSRPGSAKPVHTGTHVAPGHMETTPTPKPRPSTTGAHSKNASQDTPQHNETQTTSKGNKPISEHKPTGSQPSNNTSVTRQKEKRQEKETHREKDKRSRTEGDKQTVREKQKGTGIERAKERLMGRTRKKLAEKEKEKKKDGTCSKNQAAVVIQRAWRRSCVRGRIRKVLCRSLKGVESAEATALLIQLLWEWPVLHDHTHRKPSDVQAPPTRIAGKKSSVLQNIYGAAPSKRGTSLRAAALKTQSQSQSQVLLDLSLRTHKQLSAVECVNLVDSVSQAKQFSYHLRPSSGASQSSQN</sequence>
<protein>
    <recommendedName>
        <fullName>Inversin</fullName>
    </recommendedName>
</protein>
<comment type="function">
    <text evidence="4 5">Required for normal renal development and establishment of left-right axis. Probably acts as a molecular switch between different Wnt signaling pathways. Inhibits the canonical Wnt pathway by targeting cytoplasmic disheveled for degradation by the ubiquitin-proteasome. This suggests that it is required in renal development to oppose the repression of terminal differentiation of tubular epithelial cells by Wnt signaling.</text>
</comment>
<comment type="subunit">
    <text evidence="1">Binds calmodulin via its IQ domains.</text>
</comment>
<comment type="subcellular location">
    <subcellularLocation>
        <location evidence="1">Cytoplasm</location>
    </subcellularLocation>
    <subcellularLocation>
        <location evidence="1">Cytoplasm</location>
        <location evidence="1">Cytoskeleton</location>
    </subcellularLocation>
    <text evidence="1">Associates with the cytoskeleton.</text>
</comment>
<comment type="domain">
    <text evidence="1">The D-box (destruction box) mediate the interaction with APC proteins, and may act as a recognition signal for degradation via the ubiquitin-proteasome pathway.</text>
</comment>
<dbReference type="EMBL" id="AF465261">
    <property type="protein sequence ID" value="AAL69977.1"/>
    <property type="molecule type" value="mRNA"/>
</dbReference>
<dbReference type="RefSeq" id="NP_694502.1">
    <property type="nucleotide sequence ID" value="NM_152970.1"/>
</dbReference>
<dbReference type="SMR" id="Q8UVC1"/>
<dbReference type="FunCoup" id="Q8UVC1">
    <property type="interactions" value="2483"/>
</dbReference>
<dbReference type="STRING" id="7955.ENSDARP00000014904"/>
<dbReference type="PaxDb" id="7955-ENSDARP00000014904"/>
<dbReference type="GeneID" id="245946"/>
<dbReference type="KEGG" id="dre:245946"/>
<dbReference type="AGR" id="ZFIN:ZDB-GENE-020507-2"/>
<dbReference type="CTD" id="27130"/>
<dbReference type="ZFIN" id="ZDB-GENE-020507-2">
    <property type="gene designation" value="invs"/>
</dbReference>
<dbReference type="eggNOG" id="KOG0504">
    <property type="taxonomic scope" value="Eukaryota"/>
</dbReference>
<dbReference type="InParanoid" id="Q8UVC1"/>
<dbReference type="OrthoDB" id="20872at2759"/>
<dbReference type="PRO" id="PR:Q8UVC1"/>
<dbReference type="Proteomes" id="UP000000437">
    <property type="component" value="Chromosome 16"/>
</dbReference>
<dbReference type="GO" id="GO:0005929">
    <property type="term" value="C:cilium"/>
    <property type="evidence" value="ECO:0000314"/>
    <property type="project" value="CACAO"/>
</dbReference>
<dbReference type="GO" id="GO:0005737">
    <property type="term" value="C:cytoplasm"/>
    <property type="evidence" value="ECO:0007669"/>
    <property type="project" value="UniProtKB-SubCell"/>
</dbReference>
<dbReference type="GO" id="GO:0005856">
    <property type="term" value="C:cytoskeleton"/>
    <property type="evidence" value="ECO:0007669"/>
    <property type="project" value="UniProtKB-SubCell"/>
</dbReference>
<dbReference type="GO" id="GO:0005516">
    <property type="term" value="F:calmodulin binding"/>
    <property type="evidence" value="ECO:0007669"/>
    <property type="project" value="UniProtKB-KW"/>
</dbReference>
<dbReference type="GO" id="GO:0010171">
    <property type="term" value="P:body morphogenesis"/>
    <property type="evidence" value="ECO:0000315"/>
    <property type="project" value="ZFIN"/>
</dbReference>
<dbReference type="GO" id="GO:0035844">
    <property type="term" value="P:cloaca development"/>
    <property type="evidence" value="ECO:0000316"/>
    <property type="project" value="ZFIN"/>
</dbReference>
<dbReference type="GO" id="GO:0060027">
    <property type="term" value="P:convergent extension involved in gastrulation"/>
    <property type="evidence" value="ECO:0000316"/>
    <property type="project" value="ZFIN"/>
</dbReference>
<dbReference type="GO" id="GO:0001736">
    <property type="term" value="P:establishment of planar polarity"/>
    <property type="evidence" value="ECO:0000316"/>
    <property type="project" value="ZFIN"/>
</dbReference>
<dbReference type="GO" id="GO:0001947">
    <property type="term" value="P:heart looping"/>
    <property type="evidence" value="ECO:0000316"/>
    <property type="project" value="ZFIN"/>
</dbReference>
<dbReference type="GO" id="GO:0001822">
    <property type="term" value="P:kidney development"/>
    <property type="evidence" value="ECO:0000315"/>
    <property type="project" value="ZFIN"/>
</dbReference>
<dbReference type="GO" id="GO:0036372">
    <property type="term" value="P:opsin transport"/>
    <property type="evidence" value="ECO:0000315"/>
    <property type="project" value="ZFIN"/>
</dbReference>
<dbReference type="GO" id="GO:0072116">
    <property type="term" value="P:pronephros formation"/>
    <property type="evidence" value="ECO:0000316"/>
    <property type="project" value="ZFIN"/>
</dbReference>
<dbReference type="GO" id="GO:0072114">
    <property type="term" value="P:pronephros morphogenesis"/>
    <property type="evidence" value="ECO:0000316"/>
    <property type="project" value="ZFIN"/>
</dbReference>
<dbReference type="GO" id="GO:1904108">
    <property type="term" value="P:protein localization to ciliary inversin compartment"/>
    <property type="evidence" value="ECO:0000318"/>
    <property type="project" value="GO_Central"/>
</dbReference>
<dbReference type="GO" id="GO:0016055">
    <property type="term" value="P:Wnt signaling pathway"/>
    <property type="evidence" value="ECO:0007669"/>
    <property type="project" value="UniProtKB-KW"/>
</dbReference>
<dbReference type="CDD" id="cd23767">
    <property type="entry name" value="IQCD"/>
    <property type="match status" value="1"/>
</dbReference>
<dbReference type="FunFam" id="1.25.40.20:FF:000144">
    <property type="entry name" value="inversin isoform X1"/>
    <property type="match status" value="1"/>
</dbReference>
<dbReference type="Gene3D" id="1.25.40.20">
    <property type="entry name" value="Ankyrin repeat-containing domain"/>
    <property type="match status" value="5"/>
</dbReference>
<dbReference type="InterPro" id="IPR002110">
    <property type="entry name" value="Ankyrin_rpt"/>
</dbReference>
<dbReference type="InterPro" id="IPR036770">
    <property type="entry name" value="Ankyrin_rpt-contain_sf"/>
</dbReference>
<dbReference type="InterPro" id="IPR000048">
    <property type="entry name" value="IQ_motif_EF-hand-BS"/>
</dbReference>
<dbReference type="PANTHER" id="PTHR24198">
    <property type="entry name" value="ANKYRIN REPEAT AND PROTEIN KINASE DOMAIN-CONTAINING PROTEIN"/>
    <property type="match status" value="1"/>
</dbReference>
<dbReference type="PANTHER" id="PTHR24198:SF194">
    <property type="entry name" value="INVERSIN-A"/>
    <property type="match status" value="1"/>
</dbReference>
<dbReference type="Pfam" id="PF00023">
    <property type="entry name" value="Ank"/>
    <property type="match status" value="2"/>
</dbReference>
<dbReference type="Pfam" id="PF12796">
    <property type="entry name" value="Ank_2"/>
    <property type="match status" value="4"/>
</dbReference>
<dbReference type="SMART" id="SM00248">
    <property type="entry name" value="ANK"/>
    <property type="match status" value="16"/>
</dbReference>
<dbReference type="SMART" id="SM00015">
    <property type="entry name" value="IQ"/>
    <property type="match status" value="2"/>
</dbReference>
<dbReference type="SUPFAM" id="SSF48403">
    <property type="entry name" value="Ankyrin repeat"/>
    <property type="match status" value="2"/>
</dbReference>
<dbReference type="PROSITE" id="PS50297">
    <property type="entry name" value="ANK_REP_REGION"/>
    <property type="match status" value="1"/>
</dbReference>
<dbReference type="PROSITE" id="PS50088">
    <property type="entry name" value="ANK_REPEAT"/>
    <property type="match status" value="10"/>
</dbReference>
<dbReference type="PROSITE" id="PS50096">
    <property type="entry name" value="IQ"/>
    <property type="match status" value="1"/>
</dbReference>
<evidence type="ECO:0000250" key="1"/>
<evidence type="ECO:0000255" key="2">
    <source>
        <dbReference type="PROSITE-ProRule" id="PRU00116"/>
    </source>
</evidence>
<evidence type="ECO:0000256" key="3">
    <source>
        <dbReference type="SAM" id="MobiDB-lite"/>
    </source>
</evidence>
<evidence type="ECO:0000269" key="4">
    <source>
    </source>
</evidence>
<evidence type="ECO:0000269" key="5">
    <source>
    </source>
</evidence>
<proteinExistence type="evidence at transcript level"/>